<dbReference type="EC" id="2.7.8.-" evidence="1"/>
<dbReference type="EMBL" id="AE000516">
    <property type="protein sequence ID" value="AAK47003.1"/>
    <property type="molecule type" value="Genomic_DNA"/>
</dbReference>
<dbReference type="PIR" id="C70571">
    <property type="entry name" value="C70571"/>
</dbReference>
<dbReference type="RefSeq" id="WP_003413482.1">
    <property type="nucleotide sequence ID" value="NZ_KK341227.1"/>
</dbReference>
<dbReference type="SMR" id="P9WPG6"/>
<dbReference type="KEGG" id="mtc:MT2687"/>
<dbReference type="PATRIC" id="fig|83331.31.peg.2897"/>
<dbReference type="HOGENOM" id="CLU_080384_0_1_11"/>
<dbReference type="UniPathway" id="UPA00220"/>
<dbReference type="Proteomes" id="UP000001020">
    <property type="component" value="Chromosome"/>
</dbReference>
<dbReference type="GO" id="GO:0005886">
    <property type="term" value="C:plasma membrane"/>
    <property type="evidence" value="ECO:0007669"/>
    <property type="project" value="UniProtKB-SubCell"/>
</dbReference>
<dbReference type="GO" id="GO:0000287">
    <property type="term" value="F:magnesium ion binding"/>
    <property type="evidence" value="ECO:0007669"/>
    <property type="project" value="UniProtKB-UniRule"/>
</dbReference>
<dbReference type="GO" id="GO:0016780">
    <property type="term" value="F:phosphotransferase activity, for other substituted phosphate groups"/>
    <property type="evidence" value="ECO:0007669"/>
    <property type="project" value="UniProtKB-UniRule"/>
</dbReference>
<dbReference type="GO" id="GO:0008654">
    <property type="term" value="P:phospholipid biosynthetic process"/>
    <property type="evidence" value="ECO:0007669"/>
    <property type="project" value="UniProtKB-UniRule"/>
</dbReference>
<dbReference type="FunFam" id="1.20.120.1760:FF:000024">
    <property type="entry name" value="Probable phosphatidylinositol synthase pgsA1"/>
    <property type="match status" value="1"/>
</dbReference>
<dbReference type="Gene3D" id="1.20.120.1760">
    <property type="match status" value="1"/>
</dbReference>
<dbReference type="HAMAP" id="MF_02241">
    <property type="entry name" value="PIP_synthase"/>
    <property type="match status" value="1"/>
</dbReference>
<dbReference type="InterPro" id="IPR000462">
    <property type="entry name" value="CDP-OH_P_trans"/>
</dbReference>
<dbReference type="InterPro" id="IPR043130">
    <property type="entry name" value="CDP-OH_PTrfase_TM_dom"/>
</dbReference>
<dbReference type="InterPro" id="IPR048254">
    <property type="entry name" value="CDP_ALCOHOL_P_TRANSF_CS"/>
</dbReference>
<dbReference type="InterPro" id="IPR044268">
    <property type="entry name" value="PIP_synthase_PgsA1"/>
</dbReference>
<dbReference type="NCBIfam" id="NF045883">
    <property type="entry name" value="PIPSynth"/>
    <property type="match status" value="1"/>
</dbReference>
<dbReference type="Pfam" id="PF01066">
    <property type="entry name" value="CDP-OH_P_transf"/>
    <property type="match status" value="1"/>
</dbReference>
<dbReference type="PROSITE" id="PS00379">
    <property type="entry name" value="CDP_ALCOHOL_P_TRANSF"/>
    <property type="match status" value="1"/>
</dbReference>
<name>PIPS_MYCTO</name>
<protein>
    <recommendedName>
        <fullName evidence="1">Phosphatidylinositol phosphate synthase</fullName>
        <shortName evidence="1">PIP synthase</shortName>
        <ecNumber evidence="1">2.7.8.-</ecNumber>
    </recommendedName>
    <alternativeName>
        <fullName>CDP-diacylglycerol--D-myo-inositol-3-phosphate 3-phosphatidyltransferase</fullName>
    </alternativeName>
</protein>
<accession>P9WPG6</accession>
<accession>L0TBS2</accession>
<accession>Q79FC5</accession>
<accession>Q7D6W6</accession>
<feature type="chain" id="PRO_0000426955" description="Phosphatidylinositol phosphate synthase">
    <location>
        <begin position="1"/>
        <end position="217"/>
    </location>
</feature>
<feature type="transmembrane region" description="Helical" evidence="1">
    <location>
        <begin position="30"/>
        <end position="48"/>
    </location>
</feature>
<feature type="transmembrane region" description="Helical" evidence="1">
    <location>
        <begin position="54"/>
        <end position="77"/>
    </location>
</feature>
<feature type="transmembrane region" description="Helical" evidence="1">
    <location>
        <begin position="83"/>
        <end position="110"/>
    </location>
</feature>
<feature type="transmembrane region" description="Helical" evidence="1">
    <location>
        <begin position="115"/>
        <end position="140"/>
    </location>
</feature>
<feature type="transmembrane region" description="Helical" evidence="1">
    <location>
        <begin position="152"/>
        <end position="166"/>
    </location>
</feature>
<feature type="transmembrane region" description="Helical" evidence="1">
    <location>
        <begin position="176"/>
        <end position="200"/>
    </location>
</feature>
<feature type="active site" description="Proton acceptor" evidence="1">
    <location>
        <position position="93"/>
    </location>
</feature>
<feature type="binding site" evidence="1">
    <location>
        <begin position="31"/>
        <end position="34"/>
    </location>
    <ligand>
        <name>a CDP-1,2-diacyl-sn-glycerol</name>
        <dbReference type="ChEBI" id="CHEBI:58332"/>
    </ligand>
</feature>
<feature type="binding site" evidence="1">
    <location>
        <position position="68"/>
    </location>
    <ligand>
        <name>Mg(2+)</name>
        <dbReference type="ChEBI" id="CHEBI:18420"/>
        <label>1</label>
    </ligand>
</feature>
<feature type="binding site" evidence="1">
    <location>
        <position position="68"/>
    </location>
    <ligand>
        <name>Mg(2+)</name>
        <dbReference type="ChEBI" id="CHEBI:18420"/>
        <label>2</label>
    </ligand>
</feature>
<feature type="binding site" evidence="1">
    <location>
        <position position="71"/>
    </location>
    <ligand>
        <name>Mg(2+)</name>
        <dbReference type="ChEBI" id="CHEBI:18420"/>
        <label>1</label>
    </ligand>
</feature>
<feature type="binding site" evidence="1">
    <location>
        <position position="72"/>
    </location>
    <ligand>
        <name>a CDP-1,2-diacyl-sn-glycerol</name>
        <dbReference type="ChEBI" id="CHEBI:58332"/>
    </ligand>
</feature>
<feature type="binding site" evidence="1">
    <location>
        <position position="76"/>
    </location>
    <ligand>
        <name>a CDP-1,2-diacyl-sn-glycerol</name>
        <dbReference type="ChEBI" id="CHEBI:58332"/>
    </ligand>
</feature>
<feature type="binding site" evidence="1">
    <location>
        <position position="82"/>
    </location>
    <ligand>
        <name>a CDP-1,2-diacyl-sn-glycerol</name>
        <dbReference type="ChEBI" id="CHEBI:58332"/>
    </ligand>
</feature>
<feature type="binding site" evidence="1">
    <location>
        <position position="89"/>
    </location>
    <ligand>
        <name>Mg(2+)</name>
        <dbReference type="ChEBI" id="CHEBI:18420"/>
        <label>1</label>
    </ligand>
</feature>
<feature type="binding site" evidence="1">
    <location>
        <position position="89"/>
    </location>
    <ligand>
        <name>Mg(2+)</name>
        <dbReference type="ChEBI" id="CHEBI:18420"/>
        <label>2</label>
    </ligand>
</feature>
<feature type="binding site" evidence="1">
    <location>
        <position position="93"/>
    </location>
    <ligand>
        <name>Mg(2+)</name>
        <dbReference type="ChEBI" id="CHEBI:18420"/>
        <label>2</label>
    </ligand>
</feature>
<sequence>MSKLPFLSRAAFARITTPIARGLLRVGLTPDVVTILGTTASVAGALTLFPMGKLFAGACVVWFFVLFDMLDGAMARERGGGTRFGAVLDATCDRISDGAVFCGLLWWIAFHMRDRPLVIATLICLVTSQVISYIKARAEASGLRGDGGFIERPERLIIVLTGAGVSDFPFVPWPPALSVGMWLLAVASVITCVQRLHTVWTSPGAIDRMAIPGKGDR</sequence>
<reference key="1">
    <citation type="journal article" date="2002" name="J. Bacteriol.">
        <title>Whole-genome comparison of Mycobacterium tuberculosis clinical and laboratory strains.</title>
        <authorList>
            <person name="Fleischmann R.D."/>
            <person name="Alland D."/>
            <person name="Eisen J.A."/>
            <person name="Carpenter L."/>
            <person name="White O."/>
            <person name="Peterson J.D."/>
            <person name="DeBoy R.T."/>
            <person name="Dodson R.J."/>
            <person name="Gwinn M.L."/>
            <person name="Haft D.H."/>
            <person name="Hickey E.K."/>
            <person name="Kolonay J.F."/>
            <person name="Nelson W.C."/>
            <person name="Umayam L.A."/>
            <person name="Ermolaeva M.D."/>
            <person name="Salzberg S.L."/>
            <person name="Delcher A."/>
            <person name="Utterback T.R."/>
            <person name="Weidman J.F."/>
            <person name="Khouri H.M."/>
            <person name="Gill J."/>
            <person name="Mikula A."/>
            <person name="Bishai W."/>
            <person name="Jacobs W.R. Jr."/>
            <person name="Venter J.C."/>
            <person name="Fraser C.M."/>
        </authorList>
    </citation>
    <scope>NUCLEOTIDE SEQUENCE [LARGE SCALE GENOMIC DNA]</scope>
    <source>
        <strain>CDC 1551 / Oshkosh</strain>
    </source>
</reference>
<keyword id="KW-1003">Cell membrane</keyword>
<keyword id="KW-0444">Lipid biosynthesis</keyword>
<keyword id="KW-0443">Lipid metabolism</keyword>
<keyword id="KW-0460">Magnesium</keyword>
<keyword id="KW-0472">Membrane</keyword>
<keyword id="KW-0479">Metal-binding</keyword>
<keyword id="KW-0594">Phospholipid biosynthesis</keyword>
<keyword id="KW-1208">Phospholipid metabolism</keyword>
<keyword id="KW-1185">Reference proteome</keyword>
<keyword id="KW-0808">Transferase</keyword>
<keyword id="KW-0812">Transmembrane</keyword>
<keyword id="KW-1133">Transmembrane helix</keyword>
<proteinExistence type="inferred from homology"/>
<organism>
    <name type="scientific">Mycobacterium tuberculosis (strain CDC 1551 / Oshkosh)</name>
    <dbReference type="NCBI Taxonomy" id="83331"/>
    <lineage>
        <taxon>Bacteria</taxon>
        <taxon>Bacillati</taxon>
        <taxon>Actinomycetota</taxon>
        <taxon>Actinomycetes</taxon>
        <taxon>Mycobacteriales</taxon>
        <taxon>Mycobacteriaceae</taxon>
        <taxon>Mycobacterium</taxon>
        <taxon>Mycobacterium tuberculosis complex</taxon>
    </lineage>
</organism>
<gene>
    <name type="primary">pgsA1</name>
    <name type="ordered locus">MT2687</name>
</gene>
<evidence type="ECO:0000250" key="1">
    <source>
        <dbReference type="UniProtKB" id="P9WPG7"/>
    </source>
</evidence>
<evidence type="ECO:0000255" key="2">
    <source>
        <dbReference type="HAMAP-Rule" id="MF_02241"/>
    </source>
</evidence>
<evidence type="ECO:0000305" key="3"/>
<comment type="function">
    <text evidence="1">Catalyzes the conjugation of the 1'-hydroxyl group of D-myo-inositol-3-phosphate (also named L-myo-inositol-1-phosphate) with a lipid tail of cytidine diphosphate diacylglycerol (CDP-DAG), forming phosphatidylinositol phosphate (PIP) and CMP. PIP is a precursor of phosphatidylinositol (PI) which is an essential lipid for mycobacteria required for formation of their cell wall.</text>
</comment>
<comment type="catalytic activity">
    <reaction evidence="1">
        <text>a CDP-1,2-diacyl-sn-glycerol + 1D-myo-inositol 3-phosphate = a 1,2-diacyl-sn-glycero-3-phospho-(1D-myo-inositol-3-phosphate) + CMP + H(+)</text>
        <dbReference type="Rhea" id="RHEA:60504"/>
        <dbReference type="ChEBI" id="CHEBI:15378"/>
        <dbReference type="ChEBI" id="CHEBI:58088"/>
        <dbReference type="ChEBI" id="CHEBI:58332"/>
        <dbReference type="ChEBI" id="CHEBI:58401"/>
        <dbReference type="ChEBI" id="CHEBI:60377"/>
    </reaction>
</comment>
<comment type="catalytic activity">
    <reaction evidence="1">
        <text>1,2-di-(9Z-octadecenoyl)-sn-glycero-3-cytidine-5'-diphosphate + 1D-myo-inositol 3-phosphate = 1,2-di-(9Z-octadecenoyl)-sn-glycero-3-phospho-(1D-myo-inositol-3-phosphate) + CMP + H(+)</text>
        <dbReference type="Rhea" id="RHEA:61216"/>
        <dbReference type="ChEBI" id="CHEBI:15378"/>
        <dbReference type="ChEBI" id="CHEBI:58401"/>
        <dbReference type="ChEBI" id="CHEBI:60377"/>
        <dbReference type="ChEBI" id="CHEBI:85356"/>
        <dbReference type="ChEBI" id="CHEBI:144472"/>
    </reaction>
</comment>
<comment type="cofactor">
    <cofactor evidence="1">
        <name>Mg(2+)</name>
        <dbReference type="ChEBI" id="CHEBI:18420"/>
    </cofactor>
    <text evidence="1">Contains a di-nuclear catalytic Mg(2+) center.</text>
</comment>
<comment type="pathway">
    <text evidence="1">Phospholipid metabolism; phosphatidylinositol phosphate biosynthesis.</text>
</comment>
<comment type="subunit">
    <text evidence="1">Homodimer.</text>
</comment>
<comment type="subcellular location">
    <subcellularLocation>
        <location evidence="1">Cell membrane</location>
        <topology evidence="1">Multi-pass membrane protein</topology>
    </subcellularLocation>
</comment>
<comment type="similarity">
    <text evidence="2 3">Belongs to the CDP-alcohol phosphatidyltransferase class-I family.</text>
</comment>